<reference key="1">
    <citation type="journal article" date="2001" name="Science">
        <title>Mechanisms of evolution in Rickettsia conorii and R. prowazekii.</title>
        <authorList>
            <person name="Ogata H."/>
            <person name="Audic S."/>
            <person name="Renesto-Audiffren P."/>
            <person name="Fournier P.-E."/>
            <person name="Barbe V."/>
            <person name="Samson D."/>
            <person name="Roux V."/>
            <person name="Cossart P."/>
            <person name="Weissenbach J."/>
            <person name="Claverie J.-M."/>
            <person name="Raoult D."/>
        </authorList>
    </citation>
    <scope>NUCLEOTIDE SEQUENCE [LARGE SCALE GENOMIC DNA]</scope>
    <source>
        <strain>ATCC VR-613 / Malish 7</strain>
    </source>
</reference>
<evidence type="ECO:0000255" key="1">
    <source>
        <dbReference type="HAMAP-Rule" id="MF_01306"/>
    </source>
</evidence>
<evidence type="ECO:0000305" key="2"/>
<comment type="function">
    <text evidence="1">One of the primary rRNA binding proteins, it binds directly to 16S rRNA where it nucleates assembly of the body of the 30S subunit.</text>
</comment>
<comment type="function">
    <text evidence="1">With S5 and S12 plays an important role in translational accuracy.</text>
</comment>
<comment type="subunit">
    <text evidence="1">Part of the 30S ribosomal subunit. Contacts protein S5. The interaction surface between S4 and S5 is involved in control of translational fidelity.</text>
</comment>
<comment type="similarity">
    <text evidence="1">Belongs to the universal ribosomal protein uS4 family.</text>
</comment>
<sequence length="205" mass="23136">MTKIVRSKYKASRRLGVSLWGDSKDAFNTRNYRPGQHGQNTMIKTSDYGLHLKAKQRLKCHYGRVTEKQFRNIFALAQKMKGNTGENFIGLLESRLDTVVYRMNIAPTIFAARQLVSHGHIKLNGKKADIASIRLKAGDVIEVKESVKQIPLIQESVSKQGQTTPGYLSFDVPSLTGKYLRVPALSDVPYPFEAEVHLVIELYSR</sequence>
<proteinExistence type="inferred from homology"/>
<organism>
    <name type="scientific">Rickettsia conorii (strain ATCC VR-613 / Malish 7)</name>
    <dbReference type="NCBI Taxonomy" id="272944"/>
    <lineage>
        <taxon>Bacteria</taxon>
        <taxon>Pseudomonadati</taxon>
        <taxon>Pseudomonadota</taxon>
        <taxon>Alphaproteobacteria</taxon>
        <taxon>Rickettsiales</taxon>
        <taxon>Rickettsiaceae</taxon>
        <taxon>Rickettsieae</taxon>
        <taxon>Rickettsia</taxon>
        <taxon>spotted fever group</taxon>
    </lineage>
</organism>
<feature type="chain" id="PRO_0000132446" description="Small ribosomal subunit protein uS4">
    <location>
        <begin position="1"/>
        <end position="205"/>
    </location>
</feature>
<feature type="domain" description="S4 RNA-binding" evidence="1">
    <location>
        <begin position="94"/>
        <end position="157"/>
    </location>
</feature>
<gene>
    <name evidence="1" type="primary">rpsD</name>
    <name type="ordered locus">RC0468</name>
</gene>
<dbReference type="EMBL" id="AE006914">
    <property type="protein sequence ID" value="AAL03006.1"/>
    <property type="molecule type" value="Genomic_DNA"/>
</dbReference>
<dbReference type="PIR" id="D97758">
    <property type="entry name" value="D97758"/>
</dbReference>
<dbReference type="RefSeq" id="WP_010977111.1">
    <property type="nucleotide sequence ID" value="NC_003103.1"/>
</dbReference>
<dbReference type="SMR" id="Q92IF2"/>
<dbReference type="GeneID" id="928700"/>
<dbReference type="KEGG" id="rco:RC0468"/>
<dbReference type="HOGENOM" id="CLU_092403_0_0_5"/>
<dbReference type="Proteomes" id="UP000000816">
    <property type="component" value="Chromosome"/>
</dbReference>
<dbReference type="GO" id="GO:0015935">
    <property type="term" value="C:small ribosomal subunit"/>
    <property type="evidence" value="ECO:0007669"/>
    <property type="project" value="InterPro"/>
</dbReference>
<dbReference type="GO" id="GO:0019843">
    <property type="term" value="F:rRNA binding"/>
    <property type="evidence" value="ECO:0007669"/>
    <property type="project" value="UniProtKB-UniRule"/>
</dbReference>
<dbReference type="GO" id="GO:0003735">
    <property type="term" value="F:structural constituent of ribosome"/>
    <property type="evidence" value="ECO:0007669"/>
    <property type="project" value="InterPro"/>
</dbReference>
<dbReference type="GO" id="GO:0042274">
    <property type="term" value="P:ribosomal small subunit biogenesis"/>
    <property type="evidence" value="ECO:0007669"/>
    <property type="project" value="TreeGrafter"/>
</dbReference>
<dbReference type="GO" id="GO:0006412">
    <property type="term" value="P:translation"/>
    <property type="evidence" value="ECO:0007669"/>
    <property type="project" value="UniProtKB-UniRule"/>
</dbReference>
<dbReference type="CDD" id="cd00165">
    <property type="entry name" value="S4"/>
    <property type="match status" value="1"/>
</dbReference>
<dbReference type="FunFam" id="3.10.290.10:FF:000001">
    <property type="entry name" value="30S ribosomal protein S4"/>
    <property type="match status" value="1"/>
</dbReference>
<dbReference type="Gene3D" id="1.10.1050.10">
    <property type="entry name" value="Ribosomal Protein S4 Delta 41, Chain A, domain 1"/>
    <property type="match status" value="1"/>
</dbReference>
<dbReference type="Gene3D" id="3.10.290.10">
    <property type="entry name" value="RNA-binding S4 domain"/>
    <property type="match status" value="1"/>
</dbReference>
<dbReference type="HAMAP" id="MF_01306_B">
    <property type="entry name" value="Ribosomal_uS4_B"/>
    <property type="match status" value="1"/>
</dbReference>
<dbReference type="InterPro" id="IPR022801">
    <property type="entry name" value="Ribosomal_uS4"/>
</dbReference>
<dbReference type="InterPro" id="IPR005709">
    <property type="entry name" value="Ribosomal_uS4_bac-type"/>
</dbReference>
<dbReference type="InterPro" id="IPR018079">
    <property type="entry name" value="Ribosomal_uS4_CS"/>
</dbReference>
<dbReference type="InterPro" id="IPR001912">
    <property type="entry name" value="Ribosomal_uS4_N"/>
</dbReference>
<dbReference type="InterPro" id="IPR002942">
    <property type="entry name" value="S4_RNA-bd"/>
</dbReference>
<dbReference type="InterPro" id="IPR036986">
    <property type="entry name" value="S4_RNA-bd_sf"/>
</dbReference>
<dbReference type="NCBIfam" id="NF003717">
    <property type="entry name" value="PRK05327.1"/>
    <property type="match status" value="1"/>
</dbReference>
<dbReference type="NCBIfam" id="TIGR01017">
    <property type="entry name" value="rpsD_bact"/>
    <property type="match status" value="1"/>
</dbReference>
<dbReference type="PANTHER" id="PTHR11831">
    <property type="entry name" value="30S 40S RIBOSOMAL PROTEIN"/>
    <property type="match status" value="1"/>
</dbReference>
<dbReference type="PANTHER" id="PTHR11831:SF4">
    <property type="entry name" value="SMALL RIBOSOMAL SUBUNIT PROTEIN US4M"/>
    <property type="match status" value="1"/>
</dbReference>
<dbReference type="Pfam" id="PF00163">
    <property type="entry name" value="Ribosomal_S4"/>
    <property type="match status" value="1"/>
</dbReference>
<dbReference type="Pfam" id="PF01479">
    <property type="entry name" value="S4"/>
    <property type="match status" value="1"/>
</dbReference>
<dbReference type="SMART" id="SM01390">
    <property type="entry name" value="Ribosomal_S4"/>
    <property type="match status" value="1"/>
</dbReference>
<dbReference type="SMART" id="SM00363">
    <property type="entry name" value="S4"/>
    <property type="match status" value="1"/>
</dbReference>
<dbReference type="SUPFAM" id="SSF55174">
    <property type="entry name" value="Alpha-L RNA-binding motif"/>
    <property type="match status" value="1"/>
</dbReference>
<dbReference type="PROSITE" id="PS00632">
    <property type="entry name" value="RIBOSOMAL_S4"/>
    <property type="match status" value="1"/>
</dbReference>
<dbReference type="PROSITE" id="PS50889">
    <property type="entry name" value="S4"/>
    <property type="match status" value="1"/>
</dbReference>
<protein>
    <recommendedName>
        <fullName evidence="1">Small ribosomal subunit protein uS4</fullName>
    </recommendedName>
    <alternativeName>
        <fullName evidence="2">30S ribosomal protein S4</fullName>
    </alternativeName>
</protein>
<keyword id="KW-0687">Ribonucleoprotein</keyword>
<keyword id="KW-0689">Ribosomal protein</keyword>
<keyword id="KW-0694">RNA-binding</keyword>
<keyword id="KW-0699">rRNA-binding</keyword>
<accession>Q92IF2</accession>
<name>RS4_RICCN</name>